<protein>
    <recommendedName>
        <fullName evidence="1">Ribitol-5-phosphate cytidylyltransferase 2</fullName>
        <ecNumber evidence="1">2.7.7.40</ecNumber>
    </recommendedName>
</protein>
<keyword id="KW-0961">Cell wall biogenesis/degradation</keyword>
<keyword id="KW-0548">Nucleotidyltransferase</keyword>
<keyword id="KW-0777">Teichoic acid biosynthesis</keyword>
<keyword id="KW-0808">Transferase</keyword>
<proteinExistence type="inferred from homology"/>
<reference key="1">
    <citation type="journal article" date="2007" name="PLoS ONE">
        <title>Molecular correlates of host specialization in Staphylococcus aureus.</title>
        <authorList>
            <person name="Herron-Olson L."/>
            <person name="Fitzgerald J.R."/>
            <person name="Musser J.M."/>
            <person name="Kapur V."/>
        </authorList>
    </citation>
    <scope>NUCLEOTIDE SEQUENCE [LARGE SCALE GENOMIC DNA]</scope>
    <source>
        <strain>bovine RF122 / ET3-1</strain>
    </source>
</reference>
<evidence type="ECO:0000255" key="1">
    <source>
        <dbReference type="HAMAP-Rule" id="MF_02068"/>
    </source>
</evidence>
<name>TARI2_STAAB</name>
<gene>
    <name evidence="1" type="primary">tarI2</name>
    <name type="ordered locus">SAB0190</name>
</gene>
<comment type="function">
    <text evidence="1">Catalyzes the transfer of the cytidylyl group of CTP to D-ribitol 5-phosphate.</text>
</comment>
<comment type="catalytic activity">
    <reaction evidence="1">
        <text>D-ribitol 5-phosphate + CTP + H(+) = CDP-L-ribitol + diphosphate</text>
        <dbReference type="Rhea" id="RHEA:12456"/>
        <dbReference type="ChEBI" id="CHEBI:15378"/>
        <dbReference type="ChEBI" id="CHEBI:33019"/>
        <dbReference type="ChEBI" id="CHEBI:37563"/>
        <dbReference type="ChEBI" id="CHEBI:57608"/>
        <dbReference type="ChEBI" id="CHEBI:57695"/>
        <dbReference type="EC" id="2.7.7.40"/>
    </reaction>
</comment>
<comment type="pathway">
    <text evidence="1">Cell wall biogenesis; poly(ribitol phosphate) teichoic acid biosynthesis.</text>
</comment>
<comment type="similarity">
    <text evidence="1">Belongs to the IspD/TarI cytidylyltransferase family. TarI subfamily.</text>
</comment>
<feature type="chain" id="PRO_0000237824" description="Ribitol-5-phosphate cytidylyltransferase 2">
    <location>
        <begin position="1"/>
        <end position="238"/>
    </location>
</feature>
<feature type="binding site" evidence="1">
    <location>
        <begin position="7"/>
        <end position="10"/>
    </location>
    <ligand>
        <name>CTP</name>
        <dbReference type="ChEBI" id="CHEBI:37563"/>
    </ligand>
</feature>
<feature type="binding site" evidence="1">
    <location>
        <begin position="81"/>
        <end position="87"/>
    </location>
    <ligand>
        <name>CTP</name>
        <dbReference type="ChEBI" id="CHEBI:37563"/>
    </ligand>
</feature>
<feature type="site" description="Transition state stabilizer" evidence="1">
    <location>
        <position position="14"/>
    </location>
</feature>
<feature type="site" description="Transition state stabilizer" evidence="1">
    <location>
        <position position="22"/>
    </location>
</feature>
<feature type="site" description="Positions ribitol 5-phosphate for the nucleophilic attack" evidence="1">
    <location>
        <position position="160"/>
    </location>
</feature>
<feature type="site" description="Positions ribitol 5-phosphate for the nucleophilic attack" evidence="1">
    <location>
        <position position="217"/>
    </location>
</feature>
<sequence>MIYAGILAGGIGSRMGNVPLPKQFLDIDNKPILIHTIEKFILVSEFNEIIIATPAQWISHTQDILKKYNITDQRVKVVAGGTDRNETIMNIIDHIRNVNGINNNDVIVTHDAVRPFLTQRIIKENIEVAAKYGAVDTVIEAIDTIVMSKDKQNIHSIPVRNEMYQGQTPQSFNIKLLQDSYRALSSEQKEILSDACKIIVESGHAVKLVRGELYNIKVTTPYDLKVANAIIQGDIADD</sequence>
<dbReference type="EC" id="2.7.7.40" evidence="1"/>
<dbReference type="EMBL" id="AJ938182">
    <property type="protein sequence ID" value="CAI79878.1"/>
    <property type="molecule type" value="Genomic_DNA"/>
</dbReference>
<dbReference type="RefSeq" id="WP_000638478.1">
    <property type="nucleotide sequence ID" value="NC_007622.1"/>
</dbReference>
<dbReference type="SMR" id="Q2YV76"/>
<dbReference type="KEGG" id="sab:SAB0190"/>
<dbReference type="HOGENOM" id="CLU_061281_2_3_9"/>
<dbReference type="UniPathway" id="UPA00790"/>
<dbReference type="GO" id="GO:0050518">
    <property type="term" value="F:2-C-methyl-D-erythritol 4-phosphate cytidylyltransferase activity"/>
    <property type="evidence" value="ECO:0007669"/>
    <property type="project" value="TreeGrafter"/>
</dbReference>
<dbReference type="GO" id="GO:0047349">
    <property type="term" value="F:D-ribitol-5-phosphate cytidylyltransferase activity"/>
    <property type="evidence" value="ECO:0007669"/>
    <property type="project" value="UniProtKB-UniRule"/>
</dbReference>
<dbReference type="GO" id="GO:0071555">
    <property type="term" value="P:cell wall organization"/>
    <property type="evidence" value="ECO:0007669"/>
    <property type="project" value="UniProtKB-KW"/>
</dbReference>
<dbReference type="GO" id="GO:0008299">
    <property type="term" value="P:isoprenoid biosynthetic process"/>
    <property type="evidence" value="ECO:0007669"/>
    <property type="project" value="InterPro"/>
</dbReference>
<dbReference type="GO" id="GO:1902012">
    <property type="term" value="P:poly(ribitol phosphate) teichoic acid biosynthetic process"/>
    <property type="evidence" value="ECO:0007669"/>
    <property type="project" value="UniProtKB-UniRule"/>
</dbReference>
<dbReference type="CDD" id="cd02516">
    <property type="entry name" value="CDP-ME_synthetase"/>
    <property type="match status" value="1"/>
</dbReference>
<dbReference type="FunFam" id="3.90.550.10:FF:000003">
    <property type="entry name" value="2-C-methyl-D-erythritol 4-phosphate cytidylyltransferase"/>
    <property type="match status" value="1"/>
</dbReference>
<dbReference type="Gene3D" id="3.90.550.10">
    <property type="entry name" value="Spore Coat Polysaccharide Biosynthesis Protein SpsA, Chain A"/>
    <property type="match status" value="1"/>
</dbReference>
<dbReference type="HAMAP" id="MF_02068">
    <property type="entry name" value="TarI"/>
    <property type="match status" value="1"/>
</dbReference>
<dbReference type="InterPro" id="IPR034683">
    <property type="entry name" value="IspD/TarI"/>
</dbReference>
<dbReference type="InterPro" id="IPR050088">
    <property type="entry name" value="IspD/TarI_cytidylyltransf_bact"/>
</dbReference>
<dbReference type="InterPro" id="IPR018294">
    <property type="entry name" value="ISPD_synthase_CS"/>
</dbReference>
<dbReference type="InterPro" id="IPR029044">
    <property type="entry name" value="Nucleotide-diphossugar_trans"/>
</dbReference>
<dbReference type="InterPro" id="IPR034709">
    <property type="entry name" value="TarI"/>
</dbReference>
<dbReference type="NCBIfam" id="NF001183">
    <property type="entry name" value="PRK00155.1-3"/>
    <property type="match status" value="1"/>
</dbReference>
<dbReference type="NCBIfam" id="NF009924">
    <property type="entry name" value="PRK13385.1"/>
    <property type="match status" value="1"/>
</dbReference>
<dbReference type="PANTHER" id="PTHR32125">
    <property type="entry name" value="2-C-METHYL-D-ERYTHRITOL 4-PHOSPHATE CYTIDYLYLTRANSFERASE, CHLOROPLASTIC"/>
    <property type="match status" value="1"/>
</dbReference>
<dbReference type="PANTHER" id="PTHR32125:SF8">
    <property type="entry name" value="RIBITOL-5-PHOSPHATE CYTIDYLYLTRANSFERASE"/>
    <property type="match status" value="1"/>
</dbReference>
<dbReference type="Pfam" id="PF01128">
    <property type="entry name" value="IspD"/>
    <property type="match status" value="1"/>
</dbReference>
<dbReference type="SUPFAM" id="SSF53448">
    <property type="entry name" value="Nucleotide-diphospho-sugar transferases"/>
    <property type="match status" value="1"/>
</dbReference>
<dbReference type="PROSITE" id="PS01295">
    <property type="entry name" value="ISPD"/>
    <property type="match status" value="1"/>
</dbReference>
<accession>Q2YV76</accession>
<organism>
    <name type="scientific">Staphylococcus aureus (strain bovine RF122 / ET3-1)</name>
    <dbReference type="NCBI Taxonomy" id="273036"/>
    <lineage>
        <taxon>Bacteria</taxon>
        <taxon>Bacillati</taxon>
        <taxon>Bacillota</taxon>
        <taxon>Bacilli</taxon>
        <taxon>Bacillales</taxon>
        <taxon>Staphylococcaceae</taxon>
        <taxon>Staphylococcus</taxon>
    </lineage>
</organism>